<proteinExistence type="evidence at protein level"/>
<feature type="chain" id="PRO_0000069474" description="Gastrin/cholecystokinin type B receptor">
    <location>
        <begin position="1"/>
        <end position="447"/>
    </location>
</feature>
<feature type="topological domain" description="Extracellular" evidence="2">
    <location>
        <begin position="1"/>
        <end position="57"/>
    </location>
</feature>
<feature type="transmembrane region" description="Helical; Name=1" evidence="2">
    <location>
        <begin position="58"/>
        <end position="79"/>
    </location>
</feature>
<feature type="topological domain" description="Cytoplasmic" evidence="2">
    <location>
        <begin position="80"/>
        <end position="87"/>
    </location>
</feature>
<feature type="transmembrane region" description="Helical; Name=2" evidence="2">
    <location>
        <begin position="88"/>
        <end position="109"/>
    </location>
</feature>
<feature type="topological domain" description="Extracellular" evidence="2">
    <location>
        <begin position="110"/>
        <end position="131"/>
    </location>
</feature>
<feature type="transmembrane region" description="Helical; Name=3" evidence="2">
    <location>
        <begin position="132"/>
        <end position="150"/>
    </location>
</feature>
<feature type="topological domain" description="Cytoplasmic" evidence="2">
    <location>
        <begin position="151"/>
        <end position="170"/>
    </location>
</feature>
<feature type="transmembrane region" description="Helical; Name=4" evidence="2">
    <location>
        <begin position="171"/>
        <end position="189"/>
    </location>
</feature>
<feature type="topological domain" description="Extracellular" evidence="2">
    <location>
        <begin position="190"/>
        <end position="219"/>
    </location>
</feature>
<feature type="transmembrane region" description="Helical; Name=5" evidence="2">
    <location>
        <begin position="220"/>
        <end position="242"/>
    </location>
</feature>
<feature type="topological domain" description="Cytoplasmic" evidence="2">
    <location>
        <begin position="243"/>
        <end position="333"/>
    </location>
</feature>
<feature type="transmembrane region" description="Helical; Name=6" evidence="2">
    <location>
        <begin position="334"/>
        <end position="355"/>
    </location>
</feature>
<feature type="topological domain" description="Extracellular" evidence="2">
    <location>
        <begin position="356"/>
        <end position="373"/>
    </location>
</feature>
<feature type="transmembrane region" description="Helical; Name=7" evidence="2">
    <location>
        <begin position="374"/>
        <end position="394"/>
    </location>
</feature>
<feature type="topological domain" description="Cytoplasmic" evidence="2">
    <location>
        <begin position="395"/>
        <end position="447"/>
    </location>
</feature>
<feature type="region of interest" description="Disordered" evidence="4">
    <location>
        <begin position="258"/>
        <end position="285"/>
    </location>
</feature>
<feature type="lipid moiety-binding region" description="S-palmitoyl cysteine" evidence="1">
    <location>
        <position position="408"/>
    </location>
</feature>
<feature type="glycosylation site" description="N-linked (GlcNAc...) asparagine" evidence="2">
    <location>
        <position position="7"/>
    </location>
</feature>
<feature type="glycosylation site" description="N-linked (GlcNAc...) asparagine" evidence="2">
    <location>
        <position position="30"/>
    </location>
</feature>
<feature type="glycosylation site" description="N-linked (GlcNAc...) asparagine" evidence="2">
    <location>
        <position position="36"/>
    </location>
</feature>
<feature type="disulfide bond" evidence="3">
    <location>
        <begin position="127"/>
        <end position="205"/>
    </location>
</feature>
<feature type="splice variant" id="VSP_033444" description="In isoform 3." evidence="15">
    <location>
        <begin position="1"/>
        <end position="66"/>
    </location>
</feature>
<feature type="splice variant" id="VSP_033445" description="In isoform 2." evidence="11 12 14">
    <original>G</original>
    <variation>GGAGPREQNLGEAELWRATGPAGVGGTEMKVRVRRKLEMELSWERRSGGDWAGDWGDSPFSLTAHPLCSG</variation>
    <location>
        <position position="271"/>
    </location>
</feature>
<feature type="sequence variant" id="VAR_014684" description="In dbSNP:rs1805000.">
    <original>L</original>
    <variation>F</variation>
    <location>
        <position position="37"/>
    </location>
</feature>
<feature type="sequence variant" id="VAR_049388" description="In dbSNP:rs35816985.">
    <original>V</original>
    <variation>G</variation>
    <location>
        <position position="77"/>
    </location>
</feature>
<feature type="sequence variant" id="VAR_014685" description="In dbSNP:rs1805002.">
    <original>V</original>
    <variation>I</variation>
    <location>
        <position position="125"/>
    </location>
</feature>
<feature type="sequence variant" id="VAR_014686" description="In dbSNP:rs1805004.">
    <original>R</original>
    <variation>H</variation>
    <location>
        <position position="215"/>
    </location>
</feature>
<feature type="sequence variant" id="VAR_014687" description="In dbSNP:rs1805001.">
    <original>R</original>
    <variation>Q</variation>
    <location>
        <position position="319"/>
    </location>
</feature>
<feature type="sequence conflict" description="In Ref. 8; AAF67174." evidence="17" ref="8">
    <original>I</original>
    <variation>T</variation>
    <location>
        <position position="64"/>
    </location>
</feature>
<feature type="sequence conflict" description="In Ref. 16; AAC27510." evidence="17" ref="16">
    <original>L</original>
    <variation>F</variation>
    <location>
        <position position="93"/>
    </location>
</feature>
<feature type="sequence conflict" description="In Ref. 16; AAC27510." evidence="17" ref="16">
    <original>L</original>
    <variation>M</variation>
    <location>
        <position position="96"/>
    </location>
</feature>
<feature type="sequence conflict" description="In Ref. 16; AAC27510." evidence="17" ref="16">
    <original>L</original>
    <variation>I</variation>
    <location>
        <position position="116"/>
    </location>
</feature>
<feature type="sequence conflict" description="In Ref. 11; AAA91831." evidence="17" ref="11">
    <original>A</original>
    <variation>P</variation>
    <location>
        <position position="171"/>
    </location>
</feature>
<feature type="sequence conflict" description="In Ref. 12; BAF84753." evidence="17" ref="12">
    <original>F</original>
    <variation>S</variation>
    <location>
        <position position="227"/>
    </location>
</feature>
<feature type="sequence conflict" description="In Ref. 11; AAA91831." evidence="17" ref="11">
    <original>L</original>
    <variation>V</variation>
    <location>
        <position position="249"/>
    </location>
</feature>
<feature type="sequence conflict" description="In Ref. 5; AAB30766." evidence="17" ref="5">
    <original>E</original>
    <variation>K</variation>
    <location>
        <position position="288"/>
    </location>
</feature>
<feature type="helix" evidence="19">
    <location>
        <begin position="56"/>
        <end position="80"/>
    </location>
</feature>
<feature type="helix" evidence="19">
    <location>
        <begin position="88"/>
        <end position="116"/>
    </location>
</feature>
<feature type="strand" evidence="20">
    <location>
        <begin position="117"/>
        <end position="119"/>
    </location>
</feature>
<feature type="helix" evidence="19">
    <location>
        <begin position="124"/>
        <end position="156"/>
    </location>
</feature>
<feature type="helix" evidence="19">
    <location>
        <begin position="159"/>
        <end position="165"/>
    </location>
</feature>
<feature type="helix" evidence="19">
    <location>
        <begin position="168"/>
        <end position="185"/>
    </location>
</feature>
<feature type="turn" evidence="19">
    <location>
        <begin position="186"/>
        <end position="191"/>
    </location>
</feature>
<feature type="strand" evidence="19">
    <location>
        <begin position="199"/>
        <end position="201"/>
    </location>
</feature>
<feature type="helix" evidence="19">
    <location>
        <begin position="212"/>
        <end position="225"/>
    </location>
</feature>
<feature type="helix" evidence="19">
    <location>
        <begin position="228"/>
        <end position="248"/>
    </location>
</feature>
<feature type="helix" evidence="19">
    <location>
        <begin position="327"/>
        <end position="358"/>
    </location>
</feature>
<feature type="helix" evidence="19">
    <location>
        <begin position="363"/>
        <end position="366"/>
    </location>
</feature>
<feature type="helix" evidence="19">
    <location>
        <begin position="370"/>
        <end position="390"/>
    </location>
</feature>
<feature type="helix" evidence="19">
    <location>
        <begin position="395"/>
        <end position="404"/>
    </location>
</feature>
<organism>
    <name type="scientific">Homo sapiens</name>
    <name type="common">Human</name>
    <dbReference type="NCBI Taxonomy" id="9606"/>
    <lineage>
        <taxon>Eukaryota</taxon>
        <taxon>Metazoa</taxon>
        <taxon>Chordata</taxon>
        <taxon>Craniata</taxon>
        <taxon>Vertebrata</taxon>
        <taxon>Euteleostomi</taxon>
        <taxon>Mammalia</taxon>
        <taxon>Eutheria</taxon>
        <taxon>Euarchontoglires</taxon>
        <taxon>Primates</taxon>
        <taxon>Haplorrhini</taxon>
        <taxon>Catarrhini</taxon>
        <taxon>Hominidae</taxon>
        <taxon>Homo</taxon>
    </lineage>
</organism>
<sequence>MELLKLNRSVQGTGPGPGASLCRPGAPLLNSSSVGNLSCEPPRIRGAGTRELELAIRITLYAVIFLMSVGGNMLIIVVLGLSRRLRTVTNAFLLSLAVSDLLLAVACMPFTLLPNLMGTFIFGTVICKAVSYLMGVSVSVSTLSLVAIALERYSAICRPLQARVWQTRSHAARVIVATWLLSGLLMVPYPVYTVVQPVGPRVLQCVHRWPSARVRQTWSVLLLLLLFFIPGVVMAVAYGLISRELYLGLRFDGDSDSDSQSRVRNQGGLPGAVHQNGRCRPETGAVGEDSDGCYVQLPRSRPALELTALTAPGPGSGSRPTQAKLLAKKRVVRMLLVIVVLFFLCWLPVYSANTWRAFDGPGAHRALSGAPISFIHLLSYASACVNPLVYCFMHRRFRQACLETCARCCPRPPRARPRALPDEDPPTPSIASLSRLSYTTISTLGPG</sequence>
<accession>P32239</accession>
<accession>A8K7P9</accession>
<accession>O75824</accession>
<accession>Q16144</accession>
<accession>Q92492</accession>
<accession>Q96LC6</accession>
<accession>Q9NYK7</accession>
<accession>Q9UBV1</accession>
<dbReference type="EMBL" id="L04473">
    <property type="protein sequence ID" value="AAA35660.1"/>
    <property type="molecule type" value="mRNA"/>
</dbReference>
<dbReference type="EMBL" id="L08112">
    <property type="protein sequence ID" value="AAA35657.1"/>
    <property type="molecule type" value="mRNA"/>
</dbReference>
<dbReference type="EMBL" id="D13305">
    <property type="protein sequence ID" value="BAA02564.1"/>
    <property type="molecule type" value="mRNA"/>
</dbReference>
<dbReference type="EMBL" id="L10822">
    <property type="protein sequence ID" value="AAC37528.1"/>
    <property type="molecule type" value="Genomic_DNA"/>
</dbReference>
<dbReference type="EMBL" id="S70057">
    <property type="protein sequence ID" value="AAB30766.2"/>
    <property type="molecule type" value="mRNA"/>
</dbReference>
<dbReference type="EMBL" id="D21219">
    <property type="protein sequence ID" value="BAA04759.2"/>
    <property type="molecule type" value="Genomic_DNA"/>
</dbReference>
<dbReference type="EMBL" id="AF239668">
    <property type="protein sequence ID" value="AAF67174.1"/>
    <property type="molecule type" value="mRNA"/>
</dbReference>
<dbReference type="EMBL" id="AY029770">
    <property type="protein sequence ID" value="AAK38351.1"/>
    <property type="molecule type" value="mRNA"/>
</dbReference>
<dbReference type="EMBL" id="AF441129">
    <property type="protein sequence ID" value="AAN32829.1"/>
    <property type="molecule type" value="mRNA"/>
</dbReference>
<dbReference type="EMBL" id="L07746">
    <property type="protein sequence ID" value="AAA91831.1"/>
    <property type="molecule type" value="mRNA"/>
</dbReference>
<dbReference type="EMBL" id="AK292064">
    <property type="protein sequence ID" value="BAF84753.1"/>
    <property type="molecule type" value="mRNA"/>
</dbReference>
<dbReference type="EMBL" id="AY322551">
    <property type="protein sequence ID" value="AAP84364.1"/>
    <property type="molecule type" value="mRNA"/>
</dbReference>
<dbReference type="EMBL" id="BT006789">
    <property type="protein sequence ID" value="AAP35435.1"/>
    <property type="molecule type" value="mRNA"/>
</dbReference>
<dbReference type="EMBL" id="BC000740">
    <property type="protein sequence ID" value="AAH00740.1"/>
    <property type="molecule type" value="mRNA"/>
</dbReference>
<dbReference type="EMBL" id="AH006311">
    <property type="protein sequence ID" value="AAC27510.1"/>
    <property type="molecule type" value="Genomic_DNA"/>
</dbReference>
<dbReference type="CCDS" id="CCDS7761.1">
    <molecule id="P32239-1"/>
</dbReference>
<dbReference type="CCDS" id="CCDS86175.1">
    <molecule id="P32239-2"/>
</dbReference>
<dbReference type="PIR" id="A47430">
    <property type="entry name" value="A47430"/>
</dbReference>
<dbReference type="PIR" id="I65231">
    <property type="entry name" value="I65231"/>
</dbReference>
<dbReference type="RefSeq" id="NP_001304958.1">
    <property type="nucleotide sequence ID" value="NM_001318029.1"/>
</dbReference>
<dbReference type="RefSeq" id="NP_001350481.1">
    <molecule id="P32239-2"/>
    <property type="nucleotide sequence ID" value="NM_001363552.2"/>
</dbReference>
<dbReference type="RefSeq" id="NP_795344.1">
    <molecule id="P32239-1"/>
    <property type="nucleotide sequence ID" value="NM_176875.4"/>
</dbReference>
<dbReference type="RefSeq" id="XP_005253267.1">
    <property type="nucleotide sequence ID" value="XM_005253210.1"/>
</dbReference>
<dbReference type="RefSeq" id="XP_016874005.1">
    <property type="nucleotide sequence ID" value="XM_017018516.1"/>
</dbReference>
<dbReference type="PDB" id="1L4T">
    <property type="method" value="NMR"/>
    <property type="chains" value="A=352-379"/>
</dbReference>
<dbReference type="PDB" id="7F8V">
    <property type="method" value="EM"/>
    <property type="resolution" value="3.30 A"/>
    <property type="chains" value="R=2-418"/>
</dbReference>
<dbReference type="PDB" id="7F8W">
    <property type="method" value="EM"/>
    <property type="resolution" value="3.10 A"/>
    <property type="chains" value="R=2-418"/>
</dbReference>
<dbReference type="PDB" id="7XOW">
    <property type="method" value="EM"/>
    <property type="resolution" value="3.10 A"/>
    <property type="chains" value="R=1-447"/>
</dbReference>
<dbReference type="PDB" id="8IA7">
    <property type="method" value="EM"/>
    <property type="resolution" value="3.10 A"/>
    <property type="chains" value="R=1-447"/>
</dbReference>
<dbReference type="PDBsum" id="1L4T"/>
<dbReference type="PDBsum" id="7F8V"/>
<dbReference type="PDBsum" id="7F8W"/>
<dbReference type="PDBsum" id="7XOW"/>
<dbReference type="PDBsum" id="8IA7"/>
<dbReference type="EMDB" id="EMD-31493"/>
<dbReference type="EMDB" id="EMD-31494"/>
<dbReference type="EMDB" id="EMD-33361"/>
<dbReference type="EMDB" id="EMD-35297"/>
<dbReference type="SMR" id="P32239"/>
<dbReference type="BioGRID" id="107329">
    <property type="interactions" value="20"/>
</dbReference>
<dbReference type="CORUM" id="P32239"/>
<dbReference type="DIP" id="DIP-229N"/>
<dbReference type="FunCoup" id="P32239">
    <property type="interactions" value="730"/>
</dbReference>
<dbReference type="IntAct" id="P32239">
    <property type="interactions" value="24"/>
</dbReference>
<dbReference type="MINT" id="P32239"/>
<dbReference type="STRING" id="9606.ENSP00000435534"/>
<dbReference type="BindingDB" id="P32239"/>
<dbReference type="ChEMBL" id="CHEMBL298"/>
<dbReference type="DrugBank" id="DB00403">
    <property type="generic name" value="Ceruletide"/>
</dbReference>
<dbReference type="DrugBank" id="DB08862">
    <property type="generic name" value="Cholecystokinin"/>
</dbReference>
<dbReference type="DrugBank" id="DB04856">
    <property type="generic name" value="Dexloxiglumide"/>
</dbReference>
<dbReference type="DrugBank" id="DB12355">
    <property type="generic name" value="Netazepide"/>
</dbReference>
<dbReference type="DrugBank" id="DB00183">
    <property type="generic name" value="Pentagastrin"/>
</dbReference>
<dbReference type="DrugBank" id="DB09142">
    <property type="generic name" value="Sincalide"/>
</dbReference>
<dbReference type="DrugCentral" id="P32239"/>
<dbReference type="GuidetoPHARMACOLOGY" id="77"/>
<dbReference type="GlyCosmos" id="P32239">
    <property type="glycosylation" value="3 sites, No reported glycans"/>
</dbReference>
<dbReference type="GlyGen" id="P32239">
    <property type="glycosylation" value="5 sites"/>
</dbReference>
<dbReference type="iPTMnet" id="P32239"/>
<dbReference type="PhosphoSitePlus" id="P32239"/>
<dbReference type="BioMuta" id="CCKBR"/>
<dbReference type="DMDM" id="417029"/>
<dbReference type="MassIVE" id="P32239"/>
<dbReference type="PaxDb" id="9606-ENSP00000335544"/>
<dbReference type="PeptideAtlas" id="P32239"/>
<dbReference type="ProteomicsDB" id="54845">
    <molecule id="P32239-1"/>
</dbReference>
<dbReference type="ProteomicsDB" id="54846">
    <molecule id="P32239-2"/>
</dbReference>
<dbReference type="ProteomicsDB" id="54847">
    <molecule id="P32239-3"/>
</dbReference>
<dbReference type="Antibodypedia" id="11193">
    <property type="antibodies" value="354 antibodies from 37 providers"/>
</dbReference>
<dbReference type="DNASU" id="887"/>
<dbReference type="Ensembl" id="ENST00000334619.7">
    <molecule id="P32239-1"/>
    <property type="protein sequence ID" value="ENSP00000335544.2"/>
    <property type="gene ID" value="ENSG00000110148.10"/>
</dbReference>
<dbReference type="Ensembl" id="ENST00000525462.1">
    <molecule id="P32239-2"/>
    <property type="protein sequence ID" value="ENSP00000435534.1"/>
    <property type="gene ID" value="ENSG00000110148.10"/>
</dbReference>
<dbReference type="GeneID" id="887"/>
<dbReference type="KEGG" id="hsa:887"/>
<dbReference type="MANE-Select" id="ENST00000334619.7">
    <property type="protein sequence ID" value="ENSP00000335544.2"/>
    <property type="RefSeq nucleotide sequence ID" value="NM_176875.4"/>
    <property type="RefSeq protein sequence ID" value="NP_795344.1"/>
</dbReference>
<dbReference type="UCSC" id="uc001mcp.4">
    <molecule id="P32239-1"/>
    <property type="organism name" value="human"/>
</dbReference>
<dbReference type="AGR" id="HGNC:1571"/>
<dbReference type="CTD" id="887"/>
<dbReference type="DisGeNET" id="887"/>
<dbReference type="GeneCards" id="CCKBR"/>
<dbReference type="HGNC" id="HGNC:1571">
    <property type="gene designation" value="CCKBR"/>
</dbReference>
<dbReference type="HPA" id="ENSG00000110148">
    <property type="expression patterns" value="Group enriched (brain, pancreas, stomach)"/>
</dbReference>
<dbReference type="MIM" id="118445">
    <property type="type" value="gene"/>
</dbReference>
<dbReference type="neXtProt" id="NX_P32239"/>
<dbReference type="OpenTargets" id="ENSG00000110148"/>
<dbReference type="PharmGKB" id="PA26143"/>
<dbReference type="VEuPathDB" id="HostDB:ENSG00000110148"/>
<dbReference type="eggNOG" id="KOG3656">
    <property type="taxonomic scope" value="Eukaryota"/>
</dbReference>
<dbReference type="GeneTree" id="ENSGT01130000278338"/>
<dbReference type="HOGENOM" id="CLU_009579_6_3_1"/>
<dbReference type="InParanoid" id="P32239"/>
<dbReference type="OMA" id="GCYVNLL"/>
<dbReference type="OrthoDB" id="5987936at2759"/>
<dbReference type="PAN-GO" id="P32239">
    <property type="GO annotations" value="4 GO annotations based on evolutionary models"/>
</dbReference>
<dbReference type="PhylomeDB" id="P32239"/>
<dbReference type="TreeFam" id="TF315303"/>
<dbReference type="PathwayCommons" id="P32239"/>
<dbReference type="Reactome" id="R-HSA-375276">
    <property type="pathway name" value="Peptide ligand-binding receptors"/>
</dbReference>
<dbReference type="Reactome" id="R-HSA-416476">
    <property type="pathway name" value="G alpha (q) signalling events"/>
</dbReference>
<dbReference type="Reactome" id="R-HSA-881907">
    <property type="pathway name" value="Gastrin-CREB signalling pathway via PKC and MAPK"/>
</dbReference>
<dbReference type="SignaLink" id="P32239"/>
<dbReference type="SIGNOR" id="P32239"/>
<dbReference type="BioGRID-ORCS" id="887">
    <property type="hits" value="13 hits in 1150 CRISPR screens"/>
</dbReference>
<dbReference type="EvolutionaryTrace" id="P32239"/>
<dbReference type="GeneWiki" id="Cholecystokinin_B_receptor"/>
<dbReference type="GenomeRNAi" id="887"/>
<dbReference type="Pharos" id="P32239">
    <property type="development level" value="Tclin"/>
</dbReference>
<dbReference type="PRO" id="PR:P32239"/>
<dbReference type="Proteomes" id="UP000005640">
    <property type="component" value="Chromosome 11"/>
</dbReference>
<dbReference type="RNAct" id="P32239">
    <property type="molecule type" value="protein"/>
</dbReference>
<dbReference type="Bgee" id="ENSG00000110148">
    <property type="expression patterns" value="Expressed in Brodmann (1909) area 10 and 114 other cell types or tissues"/>
</dbReference>
<dbReference type="ExpressionAtlas" id="P32239">
    <property type="expression patterns" value="baseline and differential"/>
</dbReference>
<dbReference type="GO" id="GO:0043231">
    <property type="term" value="C:intracellular membrane-bounded organelle"/>
    <property type="evidence" value="ECO:0000314"/>
    <property type="project" value="HPA"/>
</dbReference>
<dbReference type="GO" id="GO:0005886">
    <property type="term" value="C:plasma membrane"/>
    <property type="evidence" value="ECO:0000314"/>
    <property type="project" value="HPA"/>
</dbReference>
<dbReference type="GO" id="GO:0046935">
    <property type="term" value="F:1-phosphatidylinositol-3-kinase regulator activity"/>
    <property type="evidence" value="ECO:0000304"/>
    <property type="project" value="ProtInc"/>
</dbReference>
<dbReference type="GO" id="GO:0004951">
    <property type="term" value="F:cholecystokinin receptor activity"/>
    <property type="evidence" value="ECO:0000314"/>
    <property type="project" value="GO_Central"/>
</dbReference>
<dbReference type="GO" id="GO:0015054">
    <property type="term" value="F:gastrin receptor activity"/>
    <property type="evidence" value="ECO:0000314"/>
    <property type="project" value="UniProtKB"/>
</dbReference>
<dbReference type="GO" id="GO:0008188">
    <property type="term" value="F:neuropeptide receptor activity"/>
    <property type="evidence" value="ECO:0000318"/>
    <property type="project" value="GO_Central"/>
</dbReference>
<dbReference type="GO" id="GO:0017046">
    <property type="term" value="F:peptide hormone binding"/>
    <property type="evidence" value="ECO:0000353"/>
    <property type="project" value="GO_Central"/>
</dbReference>
<dbReference type="GO" id="GO:0031741">
    <property type="term" value="F:type B gastrin/cholecystokinin receptor binding"/>
    <property type="evidence" value="ECO:0000314"/>
    <property type="project" value="NTNU_SB"/>
</dbReference>
<dbReference type="GO" id="GO:0007166">
    <property type="term" value="P:cell surface receptor signaling pathway"/>
    <property type="evidence" value="ECO:0000303"/>
    <property type="project" value="UniProtKB"/>
</dbReference>
<dbReference type="GO" id="GO:0038188">
    <property type="term" value="P:cholecystokinin signaling pathway"/>
    <property type="evidence" value="ECO:0000314"/>
    <property type="project" value="GO_Central"/>
</dbReference>
<dbReference type="GO" id="GO:0048565">
    <property type="term" value="P:digestive tract development"/>
    <property type="evidence" value="ECO:0007669"/>
    <property type="project" value="Ensembl"/>
</dbReference>
<dbReference type="GO" id="GO:0001696">
    <property type="term" value="P:gastric acid secretion"/>
    <property type="evidence" value="ECO:0007669"/>
    <property type="project" value="Ensembl"/>
</dbReference>
<dbReference type="GO" id="GO:0048732">
    <property type="term" value="P:gland development"/>
    <property type="evidence" value="ECO:0007669"/>
    <property type="project" value="Ensembl"/>
</dbReference>
<dbReference type="GO" id="GO:0007218">
    <property type="term" value="P:neuropeptide signaling pathway"/>
    <property type="evidence" value="ECO:0000318"/>
    <property type="project" value="GO_Central"/>
</dbReference>
<dbReference type="GO" id="GO:0045851">
    <property type="term" value="P:pH reduction"/>
    <property type="evidence" value="ECO:0007669"/>
    <property type="project" value="Ensembl"/>
</dbReference>
<dbReference type="GO" id="GO:0007200">
    <property type="term" value="P:phospholipase C-activating G protein-coupled receptor signaling pathway"/>
    <property type="evidence" value="ECO:0000314"/>
    <property type="project" value="GO_Central"/>
</dbReference>
<dbReference type="GO" id="GO:0008284">
    <property type="term" value="P:positive regulation of cell population proliferation"/>
    <property type="evidence" value="ECO:0000314"/>
    <property type="project" value="UniProtKB"/>
</dbReference>
<dbReference type="GO" id="GO:0007204">
    <property type="term" value="P:positive regulation of cytosolic calcium ion concentration"/>
    <property type="evidence" value="ECO:0000314"/>
    <property type="project" value="UniProtKB"/>
</dbReference>
<dbReference type="Gene3D" id="1.20.1070.10">
    <property type="entry name" value="Rhodopsin 7-helix transmembrane proteins"/>
    <property type="match status" value="1"/>
</dbReference>
<dbReference type="InterPro" id="IPR009126">
    <property type="entry name" value="Cholcskin_rcpt"/>
</dbReference>
<dbReference type="InterPro" id="IPR000314">
    <property type="entry name" value="Gastrin_rcpt"/>
</dbReference>
<dbReference type="InterPro" id="IPR000276">
    <property type="entry name" value="GPCR_Rhodpsn"/>
</dbReference>
<dbReference type="InterPro" id="IPR017452">
    <property type="entry name" value="GPCR_Rhodpsn_7TM"/>
</dbReference>
<dbReference type="PANTHER" id="PTHR24243">
    <property type="entry name" value="G-PROTEIN COUPLED RECEPTOR"/>
    <property type="match status" value="1"/>
</dbReference>
<dbReference type="PANTHER" id="PTHR24243:SF45">
    <property type="entry name" value="GASTRIN_CHOLECYSTOKININ TYPE B RECEPTOR"/>
    <property type="match status" value="1"/>
</dbReference>
<dbReference type="Pfam" id="PF00001">
    <property type="entry name" value="7tm_1"/>
    <property type="match status" value="1"/>
</dbReference>
<dbReference type="PRINTS" id="PR01822">
    <property type="entry name" value="CCYSTOKININR"/>
</dbReference>
<dbReference type="PRINTS" id="PR00527">
    <property type="entry name" value="GASTRINR"/>
</dbReference>
<dbReference type="PRINTS" id="PR00237">
    <property type="entry name" value="GPCRRHODOPSN"/>
</dbReference>
<dbReference type="SUPFAM" id="SSF81321">
    <property type="entry name" value="Family A G protein-coupled receptor-like"/>
    <property type="match status" value="1"/>
</dbReference>
<dbReference type="PROSITE" id="PS00237">
    <property type="entry name" value="G_PROTEIN_RECEP_F1_1"/>
    <property type="match status" value="1"/>
</dbReference>
<dbReference type="PROSITE" id="PS50262">
    <property type="entry name" value="G_PROTEIN_RECEP_F1_2"/>
    <property type="match status" value="1"/>
</dbReference>
<protein>
    <recommendedName>
        <fullName evidence="16">Gastrin/cholecystokinin type B receptor</fullName>
        <shortName evidence="16">CCK-B receptor</shortName>
        <shortName>CCK-BR</shortName>
    </recommendedName>
    <alternativeName>
        <fullName evidence="13">Cholecystokinin-2 receptor</fullName>
        <shortName>CCK2-R</shortName>
    </alternativeName>
</protein>
<comment type="function">
    <text>Receptor for gastrin and cholecystokinin. The CCK-B receptors occur throughout the central nervous system where they modulate anxiety, analgesia, arousal, and neuroleptic activity. This receptor mediates its action by association with G proteins that activate a phosphatidylinositol-calcium second messenger system.</text>
</comment>
<comment type="function">
    <text>Isoform 2 is constitutively activated and may regulate cancer cell proliferation via a gastrin-independent mechanism.</text>
</comment>
<comment type="interaction">
    <interactant intactId="EBI-1753137">
        <id>P32239</id>
    </interactant>
    <interactant intactId="EBI-6624436">
        <id>PRO_0000010542</id>
        <label>CCK</label>
        <dbReference type="UniProtKB" id="P06307"/>
    </interactant>
    <organismsDiffer>false</organismsDiffer>
    <experiments>2</experiments>
</comment>
<comment type="interaction">
    <interactant intactId="EBI-1753137">
        <id>P32239</id>
    </interactant>
    <interactant intactId="EBI-4315078">
        <id>Q9P121</id>
        <label>NTM</label>
    </interactant>
    <organismsDiffer>false</organismsDiffer>
    <experiments>3</experiments>
</comment>
<comment type="interaction">
    <interactant intactId="EBI-1753137">
        <id>P32239</id>
    </interactant>
    <interactant intactId="EBI-297779">
        <id>Q06124</id>
        <label>PTPN11</label>
    </interactant>
    <organismsDiffer>false</organismsDiffer>
    <experiments>5</experiments>
</comment>
<comment type="subcellular location">
    <subcellularLocation>
        <location>Cell membrane</location>
        <topology>Multi-pass membrane protein</topology>
    </subcellularLocation>
</comment>
<comment type="alternative products">
    <event type="alternative splicing"/>
    <isoform>
        <id>P32239-1</id>
        <name>1</name>
        <sequence type="displayed"/>
    </isoform>
    <isoform>
        <id>P32239-2</id>
        <name>2</name>
        <name>CCK-C</name>
        <name>CCK-BRi4sv</name>
        <sequence type="described" ref="VSP_033445"/>
    </isoform>
    <isoform>
        <id>P32239-3</id>
        <name>3</name>
        <name>DeltaCCK-B</name>
        <sequence type="described" ref="VSP_033444"/>
    </isoform>
</comment>
<comment type="tissue specificity">
    <text evidence="5 6 7 8 9 10">Isoform 1 is expressed in brain, pancreas, stomach, the colon cancer cell line LoVo and the T-lymphoblastoma Jurkat, but not in heart, placenta, liver, lung, skeletal muscle, kidney or the stomach cancer cell line AGS. Expressed at high levels in the small cell lung cancer cell line NCI-H510, at lower levels in NCI-H345, NCI-H69 and GLC-28 cell lines, not expressed in GLC-19 cell line. Within the stomach, expressed at high levels in the mucosa of the gastric fundus and at low levels in the antrum and duodenum. Isoform 2 is present in pancreatic cancer cells and colorectal cancer cells, but not in normal pancreas or colonic mucosa. Isoform 3 is expressed in brain, pancreas, stomach, the stomach cancer cell line AGS and the colon cancer cell line LoVo.</text>
</comment>
<comment type="similarity">
    <text evidence="3">Belongs to the G-protein coupled receptor 1 family.</text>
</comment>
<comment type="online information" name="Wikipedia">
    <link uri="https://en.wikipedia.org/wiki/Cholecystokinin_receptor"/>
    <text>Cholecystokinin receptor entry</text>
</comment>
<gene>
    <name evidence="18" type="primary">CCKBR</name>
    <name type="synonym">CCKRB</name>
</gene>
<evidence type="ECO:0000250" key="1">
    <source>
        <dbReference type="UniProtKB" id="P17124"/>
    </source>
</evidence>
<evidence type="ECO:0000255" key="2"/>
<evidence type="ECO:0000255" key="3">
    <source>
        <dbReference type="PROSITE-ProRule" id="PRU00521"/>
    </source>
</evidence>
<evidence type="ECO:0000256" key="4">
    <source>
        <dbReference type="SAM" id="MobiDB-lite"/>
    </source>
</evidence>
<evidence type="ECO:0000269" key="5">
    <source>
    </source>
</evidence>
<evidence type="ECO:0000269" key="6">
    <source>
    </source>
</evidence>
<evidence type="ECO:0000269" key="7">
    <source>
    </source>
</evidence>
<evidence type="ECO:0000269" key="8">
    <source>
    </source>
</evidence>
<evidence type="ECO:0000269" key="9">
    <source>
    </source>
</evidence>
<evidence type="ECO:0000269" key="10">
    <source>
    </source>
</evidence>
<evidence type="ECO:0000303" key="11">
    <source>
    </source>
</evidence>
<evidence type="ECO:0000303" key="12">
    <source>
    </source>
</evidence>
<evidence type="ECO:0000303" key="13">
    <source>
    </source>
</evidence>
<evidence type="ECO:0000303" key="14">
    <source>
    </source>
</evidence>
<evidence type="ECO:0000303" key="15">
    <source>
    </source>
</evidence>
<evidence type="ECO:0000303" key="16">
    <source>
    </source>
</evidence>
<evidence type="ECO:0000305" key="17"/>
<evidence type="ECO:0000312" key="18">
    <source>
        <dbReference type="HGNC" id="HGNC:1571"/>
    </source>
</evidence>
<evidence type="ECO:0007829" key="19">
    <source>
        <dbReference type="PDB" id="7F8W"/>
    </source>
</evidence>
<evidence type="ECO:0007829" key="20">
    <source>
        <dbReference type="PDB" id="8IA7"/>
    </source>
</evidence>
<keyword id="KW-0002">3D-structure</keyword>
<keyword id="KW-0025">Alternative splicing</keyword>
<keyword id="KW-1003">Cell membrane</keyword>
<keyword id="KW-1015">Disulfide bond</keyword>
<keyword id="KW-0297">G-protein coupled receptor</keyword>
<keyword id="KW-0325">Glycoprotein</keyword>
<keyword id="KW-0449">Lipoprotein</keyword>
<keyword id="KW-0472">Membrane</keyword>
<keyword id="KW-0564">Palmitate</keyword>
<keyword id="KW-1267">Proteomics identification</keyword>
<keyword id="KW-0675">Receptor</keyword>
<keyword id="KW-1185">Reference proteome</keyword>
<keyword id="KW-0807">Transducer</keyword>
<keyword id="KW-0812">Transmembrane</keyword>
<keyword id="KW-1133">Transmembrane helix</keyword>
<reference key="1">
    <citation type="journal article" date="1992" name="Biochem. Biophys. Res. Commun.">
        <title>Molecular cloning of the human brain and gastric cholecystokinin receptor: structure, functional expression and chromosomal localization.</title>
        <authorList>
            <person name="Pisegna J.R."/>
            <person name="de Weerth A."/>
            <person name="Huppi K."/>
            <person name="Wank S.A."/>
        </authorList>
    </citation>
    <scope>NUCLEOTIDE SEQUENCE [MRNA] (ISOFORM 1)</scope>
    <source>
        <tissue>Brain</tissue>
    </source>
</reference>
<reference key="2">
    <citation type="journal article" date="1993" name="J. Biol. Chem.">
        <title>The human brain cholecystokinin-B/gastrin receptor. Cloning and characterization.</title>
        <authorList>
            <person name="Lee Y.-M."/>
            <person name="Beinborn M."/>
            <person name="McBride E.W."/>
            <person name="Lu M."/>
            <person name="Kolakowski L.F. Jr."/>
            <person name="Kopin A.S."/>
        </authorList>
    </citation>
    <scope>NUCLEOTIDE SEQUENCE [MRNA] (ISOFORM 1)</scope>
    <source>
        <tissue>Brain</tissue>
    </source>
</reference>
<reference key="3">
    <citation type="journal article" date="1993" name="J. Biol. Chem.">
        <title>Functional characterization of a human brain cholecystokinin-B receptor. A trophic effect of cholecystokinin and gastrin.</title>
        <authorList>
            <person name="Ito M."/>
            <person name="Matsui T."/>
            <person name="Taniguchi T."/>
            <person name="Tsukamoto T."/>
            <person name="Murayama T."/>
            <person name="Arima N."/>
            <person name="Nakata H."/>
            <person name="Chiba T."/>
            <person name="Chihara K."/>
        </authorList>
    </citation>
    <scope>NUCLEOTIDE SEQUENCE [MRNA] (ISOFORM 1)</scope>
    <scope>FUNCTION</scope>
    <scope>TISSUE SPECIFICITY</scope>
    <source>
        <tissue>Brain</tissue>
    </source>
</reference>
<reference key="4">
    <citation type="journal article" date="1993" name="Proc. Natl. Acad. Sci. U.S.A.">
        <title>The human gastrin/cholecystokinin type B receptor gene: alternative splice donor site in exon 4 generates two variant mRNAs.</title>
        <authorList>
            <person name="Song I."/>
            <person name="Brown D.R."/>
            <person name="Wiltshire R.N."/>
            <person name="Gantz I."/>
            <person name="Trent J.M."/>
            <person name="Yamada T."/>
        </authorList>
    </citation>
    <scope>NUCLEOTIDE SEQUENCE [GENOMIC DNA]</scope>
    <source>
        <tissue>Placenta</tissue>
    </source>
</reference>
<reference key="5">
    <citation type="journal article" date="1994" name="Ann. N. Y. Acad. Sci.">
        <title>Cholecystokinin stimulates Ca2+ mobilization and clonal growth in small cell lung cancer through CCKA and CCKB/gastrin receptors.</title>
        <authorList>
            <person name="Herget T."/>
            <person name="Sethi T."/>
            <person name="Wu S.V."/>
            <person name="Walsh J.H."/>
            <person name="Rozengurt E."/>
        </authorList>
    </citation>
    <scope>NUCLEOTIDE SEQUENCE [MRNA] (ISOFORM 1)</scope>
    <scope>FUNCTION</scope>
    <scope>TISSUE SPECIFICITY</scope>
    <source>
        <tissue>Fetal brain</tissue>
    </source>
</reference>
<reference key="6">
    <citation type="journal article" date="1994" name="Cell Growth Differ.">
        <title>Functional characterization of two cholecystokinin-B/gastrin receptor isoforms: a preferential splice donor site in the human receptor gene.</title>
        <authorList>
            <person name="Ito M."/>
            <person name="Iwata N."/>
            <person name="Taniguchi T."/>
            <person name="Murayama T."/>
            <person name="Chihara K."/>
            <person name="Matsui T."/>
        </authorList>
    </citation>
    <scope>NUCLEOTIDE SEQUENCE [GENOMIC DNA]</scope>
    <scope>FUNCTION</scope>
    <scope>ALTERNATIVE SPLICING</scope>
    <scope>TISSUE SPECIFICITY</scope>
    <source>
        <tissue>Lung fibroblast</tissue>
    </source>
</reference>
<reference key="7">
    <citation type="journal article" date="1995" name="Biochem. Biophys. Res. Commun.">
        <title>A truncated isoform of human CCK-B/gastrin receptor generated by alternative usage of a novel exon.</title>
        <authorList>
            <person name="Miyake A."/>
        </authorList>
    </citation>
    <scope>NUCLEOTIDE SEQUENCE [MRNA] (ISOFORM 3)</scope>
    <scope>TISSUE SPECIFICITY</scope>
    <source>
        <tissue>Stomach</tissue>
    </source>
</reference>
<reference key="8">
    <citation type="journal article" date="2000" name="J. Biol. Chem.">
        <title>Human colorectal cancers express a constitutively active cholecystokinin-B/gastrin receptor that stimulates cell growth.</title>
        <authorList>
            <person name="Hellmich M.R."/>
            <person name="Rui X.-L."/>
            <person name="Hellmich H.L."/>
            <person name="Fleming R.Y.D."/>
            <person name="Evers B.M."/>
            <person name="Townsend C.M. Jr."/>
        </authorList>
    </citation>
    <scope>NUCLEOTIDE SEQUENCE [MRNA] (ISOFORM 2)</scope>
    <scope>FUNCTION (ISOFORM 2)</scope>
    <scope>TISSUE SPECIFICITY</scope>
    <source>
        <tissue>Colon cancer</tissue>
    </source>
</reference>
<reference key="9">
    <citation type="journal article" date="2001" name="Regul. Pept.">
        <title>Identification of CCK-B/gastrin receptor splice variants in human peripheral blood mononuclear cells.</title>
        <authorList>
            <person name="Schmitz F."/>
            <person name="Schrader H."/>
            <person name="Otte J.-M."/>
            <person name="Schmitz H."/>
            <person name="Stueber E."/>
            <person name="Herzig K.-H."/>
            <person name="Schmidt W.E."/>
        </authorList>
    </citation>
    <scope>NUCLEOTIDE SEQUENCE [MRNA] (ISOFORM 2)</scope>
    <scope>FUNCTION</scope>
    <scope>ALTERNATIVE SPLICING</scope>
    <source>
        <tissue>Peripheral blood</tissue>
    </source>
</reference>
<reference key="10">
    <citation type="journal article" date="2002" name="Int. J. Mol. Med.">
        <title>Characterization of the CCK-C (cancer) receptor in human pancreatic cancer.</title>
        <authorList>
            <person name="Smith J.P."/>
            <person name="Verderame M.F."/>
            <person name="McLaughlin P."/>
            <person name="Martenis M."/>
            <person name="Ballard E."/>
            <person name="Zagon I.S."/>
        </authorList>
    </citation>
    <scope>NUCLEOTIDE SEQUENCE [MRNA] (ISOFORM 2)</scope>
    <scope>TISSUE SPECIFICITY</scope>
    <source>
        <tissue>Pancreatic cancer</tissue>
    </source>
</reference>
<reference key="11">
    <citation type="submission" date="1996-03" db="EMBL/GenBank/DDBJ databases">
        <title>Cloning and expression of the human temporal cortex cholecystokinin B receptor.</title>
        <authorList>
            <person name="Tate S.N."/>
            <person name="Gray J."/>
            <person name="Denyer J."/>
            <person name="Stolz M."/>
            <person name="Foord S."/>
            <person name="Lee M.G."/>
        </authorList>
    </citation>
    <scope>NUCLEOTIDE SEQUENCE [MRNA]</scope>
    <source>
        <tissue>Temporal cortex</tissue>
    </source>
</reference>
<reference key="12">
    <citation type="journal article" date="2004" name="Nat. Genet.">
        <title>Complete sequencing and characterization of 21,243 full-length human cDNAs.</title>
        <authorList>
            <person name="Ota T."/>
            <person name="Suzuki Y."/>
            <person name="Nishikawa T."/>
            <person name="Otsuki T."/>
            <person name="Sugiyama T."/>
            <person name="Irie R."/>
            <person name="Wakamatsu A."/>
            <person name="Hayashi K."/>
            <person name="Sato H."/>
            <person name="Nagai K."/>
            <person name="Kimura K."/>
            <person name="Makita H."/>
            <person name="Sekine M."/>
            <person name="Obayashi M."/>
            <person name="Nishi T."/>
            <person name="Shibahara T."/>
            <person name="Tanaka T."/>
            <person name="Ishii S."/>
            <person name="Yamamoto J."/>
            <person name="Saito K."/>
            <person name="Kawai Y."/>
            <person name="Isono Y."/>
            <person name="Nakamura Y."/>
            <person name="Nagahari K."/>
            <person name="Murakami K."/>
            <person name="Yasuda T."/>
            <person name="Iwayanagi T."/>
            <person name="Wagatsuma M."/>
            <person name="Shiratori A."/>
            <person name="Sudo H."/>
            <person name="Hosoiri T."/>
            <person name="Kaku Y."/>
            <person name="Kodaira H."/>
            <person name="Kondo H."/>
            <person name="Sugawara M."/>
            <person name="Takahashi M."/>
            <person name="Kanda K."/>
            <person name="Yokoi T."/>
            <person name="Furuya T."/>
            <person name="Kikkawa E."/>
            <person name="Omura Y."/>
            <person name="Abe K."/>
            <person name="Kamihara K."/>
            <person name="Katsuta N."/>
            <person name="Sato K."/>
            <person name="Tanikawa M."/>
            <person name="Yamazaki M."/>
            <person name="Ninomiya K."/>
            <person name="Ishibashi T."/>
            <person name="Yamashita H."/>
            <person name="Murakawa K."/>
            <person name="Fujimori K."/>
            <person name="Tanai H."/>
            <person name="Kimata M."/>
            <person name="Watanabe M."/>
            <person name="Hiraoka S."/>
            <person name="Chiba Y."/>
            <person name="Ishida S."/>
            <person name="Ono Y."/>
            <person name="Takiguchi S."/>
            <person name="Watanabe S."/>
            <person name="Yosida M."/>
            <person name="Hotuta T."/>
            <person name="Kusano J."/>
            <person name="Kanehori K."/>
            <person name="Takahashi-Fujii A."/>
            <person name="Hara H."/>
            <person name="Tanase T.-O."/>
            <person name="Nomura Y."/>
            <person name="Togiya S."/>
            <person name="Komai F."/>
            <person name="Hara R."/>
            <person name="Takeuchi K."/>
            <person name="Arita M."/>
            <person name="Imose N."/>
            <person name="Musashino K."/>
            <person name="Yuuki H."/>
            <person name="Oshima A."/>
            <person name="Sasaki N."/>
            <person name="Aotsuka S."/>
            <person name="Yoshikawa Y."/>
            <person name="Matsunawa H."/>
            <person name="Ichihara T."/>
            <person name="Shiohata N."/>
            <person name="Sano S."/>
            <person name="Moriya S."/>
            <person name="Momiyama H."/>
            <person name="Satoh N."/>
            <person name="Takami S."/>
            <person name="Terashima Y."/>
            <person name="Suzuki O."/>
            <person name="Nakagawa S."/>
            <person name="Senoh A."/>
            <person name="Mizoguchi H."/>
            <person name="Goto Y."/>
            <person name="Shimizu F."/>
            <person name="Wakebe H."/>
            <person name="Hishigaki H."/>
            <person name="Watanabe T."/>
            <person name="Sugiyama A."/>
            <person name="Takemoto M."/>
            <person name="Kawakami B."/>
            <person name="Yamazaki M."/>
            <person name="Watanabe K."/>
            <person name="Kumagai A."/>
            <person name="Itakura S."/>
            <person name="Fukuzumi Y."/>
            <person name="Fujimori Y."/>
            <person name="Komiyama M."/>
            <person name="Tashiro H."/>
            <person name="Tanigami A."/>
            <person name="Fujiwara T."/>
            <person name="Ono T."/>
            <person name="Yamada K."/>
            <person name="Fujii Y."/>
            <person name="Ozaki K."/>
            <person name="Hirao M."/>
            <person name="Ohmori Y."/>
            <person name="Kawabata A."/>
            <person name="Hikiji T."/>
            <person name="Kobatake N."/>
            <person name="Inagaki H."/>
            <person name="Ikema Y."/>
            <person name="Okamoto S."/>
            <person name="Okitani R."/>
            <person name="Kawakami T."/>
            <person name="Noguchi S."/>
            <person name="Itoh T."/>
            <person name="Shigeta K."/>
            <person name="Senba T."/>
            <person name="Matsumura K."/>
            <person name="Nakajima Y."/>
            <person name="Mizuno T."/>
            <person name="Morinaga M."/>
            <person name="Sasaki M."/>
            <person name="Togashi T."/>
            <person name="Oyama M."/>
            <person name="Hata H."/>
            <person name="Watanabe M."/>
            <person name="Komatsu T."/>
            <person name="Mizushima-Sugano J."/>
            <person name="Satoh T."/>
            <person name="Shirai Y."/>
            <person name="Takahashi Y."/>
            <person name="Nakagawa K."/>
            <person name="Okumura K."/>
            <person name="Nagase T."/>
            <person name="Nomura N."/>
            <person name="Kikuchi H."/>
            <person name="Masuho Y."/>
            <person name="Yamashita R."/>
            <person name="Nakai K."/>
            <person name="Yada T."/>
            <person name="Nakamura Y."/>
            <person name="Ohara O."/>
            <person name="Isogai T."/>
            <person name="Sugano S."/>
        </authorList>
    </citation>
    <scope>NUCLEOTIDE SEQUENCE [LARGE SCALE MRNA] (ISOFORM 1)</scope>
    <source>
        <tissue>Stomach</tissue>
    </source>
</reference>
<reference key="13">
    <citation type="submission" date="2003-06" db="EMBL/GenBank/DDBJ databases">
        <title>cDNA clones of human proteins involved in signal transduction sequenced by the Guthrie cDNA resource center (www.cdna.org).</title>
        <authorList>
            <person name="Kopatz S.A."/>
            <person name="Aronstam R.S."/>
            <person name="Sharma S.V."/>
        </authorList>
    </citation>
    <scope>NUCLEOTIDE SEQUENCE [LARGE SCALE MRNA] (ISOFORM 1)</scope>
    <source>
        <tissue>Brain</tissue>
    </source>
</reference>
<reference key="14">
    <citation type="submission" date="2003-05" db="EMBL/GenBank/DDBJ databases">
        <title>Cloning of human full-length CDSs in BD Creator(TM) system donor vector.</title>
        <authorList>
            <person name="Kalnine N."/>
            <person name="Chen X."/>
            <person name="Rolfs A."/>
            <person name="Halleck A."/>
            <person name="Hines L."/>
            <person name="Eisenstein S."/>
            <person name="Koundinya M."/>
            <person name="Raphael J."/>
            <person name="Moreira D."/>
            <person name="Kelley T."/>
            <person name="LaBaer J."/>
            <person name="Lin Y."/>
            <person name="Phelan M."/>
            <person name="Farmer A."/>
        </authorList>
    </citation>
    <scope>NUCLEOTIDE SEQUENCE [LARGE SCALE MRNA] (ISOFORM 1)</scope>
</reference>
<reference key="15">
    <citation type="journal article" date="2004" name="Genome Res.">
        <title>The status, quality, and expansion of the NIH full-length cDNA project: the Mammalian Gene Collection (MGC).</title>
        <authorList>
            <consortium name="The MGC Project Team"/>
        </authorList>
    </citation>
    <scope>NUCLEOTIDE SEQUENCE [LARGE SCALE MRNA] (ISOFORM 1)</scope>
    <source>
        <tissue>Placenta</tissue>
    </source>
</reference>
<reference key="16">
    <citation type="journal article" date="1998" name="Chromosome Res.">
        <title>An 84-kilobase physical map and repeat polymorphisms of the gastrin/cholecystokinin brain receptor region at the junction of chromosome segments 11p15.4 and 15.5.</title>
        <authorList>
            <person name="O'Briant K.C."/>
            <person name="Ali S.Y."/>
            <person name="Weier H.-U.G."/>
            <person name="Bepler G."/>
        </authorList>
    </citation>
    <scope>NUCLEOTIDE SEQUENCE [GENOMIC DNA] OF 52-447</scope>
</reference>
<reference key="17">
    <citation type="journal article" date="1993" name="Cancer Res.">
        <title>CCKA and CCKB receptors are expressed in small cell lung cancer lines and mediate Ca2+ mobilization and clonal growth.</title>
        <authorList>
            <person name="Sethi T."/>
            <person name="Herget T."/>
            <person name="Wu S.V."/>
            <person name="Walsh J.H."/>
            <person name="Rozengurt E."/>
        </authorList>
    </citation>
    <scope>NUCLEOTIDE SEQUENCE [MRNA] OF 244-333 (ISOFORMS 1/3)</scope>
    <scope>FUNCTION</scope>
    <source>
        <tissue>Fetal brain</tissue>
    </source>
</reference>
<reference key="18">
    <citation type="journal article" date="1994" name="Cytogenet. Cell Genet.">
        <title>Localization of the human cholecystokinin-B/gastrin receptor gene (CCKBR) to chromosome 11p15.5--&gt;p15.4 by fluorescence in situ hybridization.</title>
        <authorList>
            <person name="Zimonjic D.B."/>
            <person name="Popescu N.C."/>
            <person name="Matsui T."/>
            <person name="Ito M."/>
            <person name="Chihara K."/>
        </authorList>
    </citation>
    <scope>CHROMOSOMAL LOCATION</scope>
</reference>
<reference key="19">
    <citation type="journal article" date="2002" name="Biochemistry">
        <title>Intermolecular interactions between cholecystokinin-8 and the third extracellular loop of the cholecystokinin-2 receptor.</title>
        <authorList>
            <person name="Giragossian C."/>
            <person name="Mierke D.F."/>
        </authorList>
    </citation>
    <scope>STRUCTURE BY NMR OF 352-379</scope>
</reference>
<name>GASR_HUMAN</name>